<dbReference type="EC" id="2.3.-.-"/>
<dbReference type="EMBL" id="X95966">
    <property type="protein sequence ID" value="CAA65210.1"/>
    <property type="molecule type" value="Genomic_DNA"/>
</dbReference>
<dbReference type="EMBL" id="Z49770">
    <property type="protein sequence ID" value="CAA89843.1"/>
    <property type="molecule type" value="Genomic_DNA"/>
</dbReference>
<dbReference type="EMBL" id="Z74314">
    <property type="protein sequence ID" value="CAA98838.1"/>
    <property type="molecule type" value="Genomic_DNA"/>
</dbReference>
<dbReference type="EMBL" id="BK006938">
    <property type="protein sequence ID" value="DAA11864.1"/>
    <property type="molecule type" value="Genomic_DNA"/>
</dbReference>
<dbReference type="PIR" id="S54641">
    <property type="entry name" value="S54641"/>
</dbReference>
<dbReference type="BioGRID" id="32068">
    <property type="interactions" value="41"/>
</dbReference>
<dbReference type="DIP" id="DIP-5174N"/>
<dbReference type="FunCoup" id="Q12185">
    <property type="interactions" value="335"/>
</dbReference>
<dbReference type="IntAct" id="Q12185">
    <property type="interactions" value="1"/>
</dbReference>
<dbReference type="MINT" id="Q12185"/>
<dbReference type="STRING" id="4932.YDR018C"/>
<dbReference type="PaxDb" id="4932-YDR018C"/>
<dbReference type="PeptideAtlas" id="Q12185"/>
<dbReference type="EnsemblFungi" id="YDR018C_mRNA">
    <property type="protein sequence ID" value="YDR018C"/>
    <property type="gene ID" value="YDR018C"/>
</dbReference>
<dbReference type="KEGG" id="sce:YDR018C"/>
<dbReference type="AGR" id="SGD:S000002425"/>
<dbReference type="SGD" id="S000002425">
    <property type="gene designation" value="YDR018C"/>
</dbReference>
<dbReference type="VEuPathDB" id="FungiDB:YDR018C"/>
<dbReference type="eggNOG" id="KOG1505">
    <property type="taxonomic scope" value="Eukaryota"/>
</dbReference>
<dbReference type="GeneTree" id="ENSGT00950000182836"/>
<dbReference type="HOGENOM" id="CLU_041844_3_2_1"/>
<dbReference type="InParanoid" id="Q12185"/>
<dbReference type="OMA" id="FYIREFR"/>
<dbReference type="OrthoDB" id="189226at2759"/>
<dbReference type="BioCyc" id="YEAST:G3O-29636-MONOMER"/>
<dbReference type="Reactome" id="R-SCE-1482925">
    <property type="pathway name" value="Acyl chain remodelling of PG"/>
</dbReference>
<dbReference type="BioGRID-ORCS" id="851581">
    <property type="hits" value="0 hits in 10 CRISPR screens"/>
</dbReference>
<dbReference type="PRO" id="PR:Q12185"/>
<dbReference type="Proteomes" id="UP000002311">
    <property type="component" value="Chromosome IV"/>
</dbReference>
<dbReference type="RNAct" id="Q12185">
    <property type="molecule type" value="protein"/>
</dbReference>
<dbReference type="GO" id="GO:0012505">
    <property type="term" value="C:endomembrane system"/>
    <property type="evidence" value="ECO:0000318"/>
    <property type="project" value="GO_Central"/>
</dbReference>
<dbReference type="GO" id="GO:0005783">
    <property type="term" value="C:endoplasmic reticulum"/>
    <property type="evidence" value="ECO:0007005"/>
    <property type="project" value="SGD"/>
</dbReference>
<dbReference type="GO" id="GO:0016020">
    <property type="term" value="C:membrane"/>
    <property type="evidence" value="ECO:0007669"/>
    <property type="project" value="UniProtKB-SubCell"/>
</dbReference>
<dbReference type="GO" id="GO:0044233">
    <property type="term" value="C:mitochondria-associated endoplasmic reticulum membrane contact site"/>
    <property type="evidence" value="ECO:0000314"/>
    <property type="project" value="SGD"/>
</dbReference>
<dbReference type="GO" id="GO:0005634">
    <property type="term" value="C:nucleus"/>
    <property type="evidence" value="ECO:0007005"/>
    <property type="project" value="SGD"/>
</dbReference>
<dbReference type="GO" id="GO:0016746">
    <property type="term" value="F:acyltransferase activity"/>
    <property type="evidence" value="ECO:0000318"/>
    <property type="project" value="GO_Central"/>
</dbReference>
<dbReference type="GO" id="GO:0042171">
    <property type="term" value="F:lysophosphatidic acid acyltransferase activity"/>
    <property type="evidence" value="ECO:0000314"/>
    <property type="project" value="SGD"/>
</dbReference>
<dbReference type="GO" id="GO:0006654">
    <property type="term" value="P:phosphatidic acid biosynthetic process"/>
    <property type="evidence" value="ECO:0000314"/>
    <property type="project" value="SGD"/>
</dbReference>
<dbReference type="GO" id="GO:0036152">
    <property type="term" value="P:phosphatidylethanolamine acyl-chain remodeling"/>
    <property type="evidence" value="ECO:0000315"/>
    <property type="project" value="SGD"/>
</dbReference>
<dbReference type="GO" id="GO:0036149">
    <property type="term" value="P:phosphatidylinositol acyl-chain remodeling"/>
    <property type="evidence" value="ECO:0000318"/>
    <property type="project" value="GO_Central"/>
</dbReference>
<dbReference type="GO" id="GO:0036150">
    <property type="term" value="P:phosphatidylserine acyl-chain remodeling"/>
    <property type="evidence" value="ECO:0000315"/>
    <property type="project" value="SGD"/>
</dbReference>
<dbReference type="CDD" id="cd07990">
    <property type="entry name" value="LPLAT_LCLAT1-like"/>
    <property type="match status" value="1"/>
</dbReference>
<dbReference type="InterPro" id="IPR032098">
    <property type="entry name" value="Acyltransf_C"/>
</dbReference>
<dbReference type="InterPro" id="IPR002123">
    <property type="entry name" value="Plipid/glycerol_acylTrfase"/>
</dbReference>
<dbReference type="PANTHER" id="PTHR10983">
    <property type="entry name" value="1-ACYLGLYCEROL-3-PHOSPHATE ACYLTRANSFERASE-RELATED"/>
    <property type="match status" value="1"/>
</dbReference>
<dbReference type="PANTHER" id="PTHR10983:SF16">
    <property type="entry name" value="LYSOCARDIOLIPIN ACYLTRANSFERASE 1"/>
    <property type="match status" value="1"/>
</dbReference>
<dbReference type="Pfam" id="PF16076">
    <property type="entry name" value="Acyltransf_C"/>
    <property type="match status" value="1"/>
</dbReference>
<dbReference type="Pfam" id="PF01553">
    <property type="entry name" value="Acyltransferase"/>
    <property type="match status" value="1"/>
</dbReference>
<dbReference type="SMART" id="SM00563">
    <property type="entry name" value="PlsC"/>
    <property type="match status" value="1"/>
</dbReference>
<dbReference type="SUPFAM" id="SSF69593">
    <property type="entry name" value="Glycerol-3-phosphate (1)-acyltransferase"/>
    <property type="match status" value="1"/>
</dbReference>
<proteinExistence type="inferred from homology"/>
<reference key="1">
    <citation type="journal article" date="1996" name="Yeast">
        <title>Sequencing and analysis of a 35.4 kb region on the right arm of chromosome IV from Saccharomyces cerevisiae reveal 23 open reading frames.</title>
        <authorList>
            <person name="Eide L.G."/>
            <person name="Sander C."/>
            <person name="Prydz H."/>
        </authorList>
    </citation>
    <scope>NUCLEOTIDE SEQUENCE [GENOMIC DNA]</scope>
</reference>
<reference key="2">
    <citation type="journal article" date="1997" name="Nature">
        <title>The nucleotide sequence of Saccharomyces cerevisiae chromosome IV.</title>
        <authorList>
            <person name="Jacq C."/>
            <person name="Alt-Moerbe J."/>
            <person name="Andre B."/>
            <person name="Arnold W."/>
            <person name="Bahr A."/>
            <person name="Ballesta J.P.G."/>
            <person name="Bargues M."/>
            <person name="Baron L."/>
            <person name="Becker A."/>
            <person name="Biteau N."/>
            <person name="Bloecker H."/>
            <person name="Blugeon C."/>
            <person name="Boskovic J."/>
            <person name="Brandt P."/>
            <person name="Brueckner M."/>
            <person name="Buitrago M.J."/>
            <person name="Coster F."/>
            <person name="Delaveau T."/>
            <person name="del Rey F."/>
            <person name="Dujon B."/>
            <person name="Eide L.G."/>
            <person name="Garcia-Cantalejo J.M."/>
            <person name="Goffeau A."/>
            <person name="Gomez-Peris A."/>
            <person name="Granotier C."/>
            <person name="Hanemann V."/>
            <person name="Hankeln T."/>
            <person name="Hoheisel J.D."/>
            <person name="Jaeger W."/>
            <person name="Jimenez A."/>
            <person name="Jonniaux J.-L."/>
            <person name="Kraemer C."/>
            <person name="Kuester H."/>
            <person name="Laamanen P."/>
            <person name="Legros Y."/>
            <person name="Louis E.J."/>
            <person name="Moeller-Rieker S."/>
            <person name="Monnet A."/>
            <person name="Moro M."/>
            <person name="Mueller-Auer S."/>
            <person name="Nussbaumer B."/>
            <person name="Paricio N."/>
            <person name="Paulin L."/>
            <person name="Perea J."/>
            <person name="Perez-Alonso M."/>
            <person name="Perez-Ortin J.E."/>
            <person name="Pohl T.M."/>
            <person name="Prydz H."/>
            <person name="Purnelle B."/>
            <person name="Rasmussen S.W."/>
            <person name="Remacha M.A."/>
            <person name="Revuelta J.L."/>
            <person name="Rieger M."/>
            <person name="Salom D."/>
            <person name="Saluz H.P."/>
            <person name="Saiz J.E."/>
            <person name="Saren A.-M."/>
            <person name="Schaefer M."/>
            <person name="Scharfe M."/>
            <person name="Schmidt E.R."/>
            <person name="Schneider C."/>
            <person name="Scholler P."/>
            <person name="Schwarz S."/>
            <person name="Soler-Mira A."/>
            <person name="Urrestarazu L.A."/>
            <person name="Verhasselt P."/>
            <person name="Vissers S."/>
            <person name="Voet M."/>
            <person name="Volckaert G."/>
            <person name="Wagner G."/>
            <person name="Wambutt R."/>
            <person name="Wedler E."/>
            <person name="Wedler H."/>
            <person name="Woelfl S."/>
            <person name="Harris D.E."/>
            <person name="Bowman S."/>
            <person name="Brown D."/>
            <person name="Churcher C.M."/>
            <person name="Connor R."/>
            <person name="Dedman K."/>
            <person name="Gentles S."/>
            <person name="Hamlin N."/>
            <person name="Hunt S."/>
            <person name="Jones L."/>
            <person name="McDonald S."/>
            <person name="Murphy L.D."/>
            <person name="Niblett D."/>
            <person name="Odell C."/>
            <person name="Oliver K."/>
            <person name="Rajandream M.A."/>
            <person name="Richards C."/>
            <person name="Shore L."/>
            <person name="Walsh S.V."/>
            <person name="Barrell B.G."/>
            <person name="Dietrich F.S."/>
            <person name="Mulligan J.T."/>
            <person name="Allen E."/>
            <person name="Araujo R."/>
            <person name="Aviles E."/>
            <person name="Berno A."/>
            <person name="Carpenter J."/>
            <person name="Chen E."/>
            <person name="Cherry J.M."/>
            <person name="Chung E."/>
            <person name="Duncan M."/>
            <person name="Hunicke-Smith S."/>
            <person name="Hyman R.W."/>
            <person name="Komp C."/>
            <person name="Lashkari D."/>
            <person name="Lew H."/>
            <person name="Lin D."/>
            <person name="Mosedale D."/>
            <person name="Nakahara K."/>
            <person name="Namath A."/>
            <person name="Oefner P."/>
            <person name="Oh C."/>
            <person name="Petel F.X."/>
            <person name="Roberts D."/>
            <person name="Schramm S."/>
            <person name="Schroeder M."/>
            <person name="Shogren T."/>
            <person name="Shroff N."/>
            <person name="Winant A."/>
            <person name="Yelton M.A."/>
            <person name="Botstein D."/>
            <person name="Davis R.W."/>
            <person name="Johnston M."/>
            <person name="Andrews S."/>
            <person name="Brinkman R."/>
            <person name="Cooper J."/>
            <person name="Ding H."/>
            <person name="Du Z."/>
            <person name="Favello A."/>
            <person name="Fulton L."/>
            <person name="Gattung S."/>
            <person name="Greco T."/>
            <person name="Hallsworth K."/>
            <person name="Hawkins J."/>
            <person name="Hillier L.W."/>
            <person name="Jier M."/>
            <person name="Johnson D."/>
            <person name="Johnston L."/>
            <person name="Kirsten J."/>
            <person name="Kucaba T."/>
            <person name="Langston Y."/>
            <person name="Latreille P."/>
            <person name="Le T."/>
            <person name="Mardis E."/>
            <person name="Menezes S."/>
            <person name="Miller N."/>
            <person name="Nhan M."/>
            <person name="Pauley A."/>
            <person name="Peluso D."/>
            <person name="Rifkin L."/>
            <person name="Riles L."/>
            <person name="Taich A."/>
            <person name="Trevaskis E."/>
            <person name="Vignati D."/>
            <person name="Wilcox L."/>
            <person name="Wohldman P."/>
            <person name="Vaudin M."/>
            <person name="Wilson R."/>
            <person name="Waterston R."/>
            <person name="Albermann K."/>
            <person name="Hani J."/>
            <person name="Heumann K."/>
            <person name="Kleine K."/>
            <person name="Mewes H.-W."/>
            <person name="Zollner A."/>
            <person name="Zaccaria P."/>
        </authorList>
    </citation>
    <scope>NUCLEOTIDE SEQUENCE [LARGE SCALE GENOMIC DNA]</scope>
    <source>
        <strain>ATCC 204508 / S288c</strain>
    </source>
</reference>
<reference key="3">
    <citation type="journal article" date="2014" name="G3 (Bethesda)">
        <title>The reference genome sequence of Saccharomyces cerevisiae: Then and now.</title>
        <authorList>
            <person name="Engel S.R."/>
            <person name="Dietrich F.S."/>
            <person name="Fisk D.G."/>
            <person name="Binkley G."/>
            <person name="Balakrishnan R."/>
            <person name="Costanzo M.C."/>
            <person name="Dwight S.S."/>
            <person name="Hitz B.C."/>
            <person name="Karra K."/>
            <person name="Nash R.S."/>
            <person name="Weng S."/>
            <person name="Wong E.D."/>
            <person name="Lloyd P."/>
            <person name="Skrzypek M.S."/>
            <person name="Miyasato S.R."/>
            <person name="Simison M."/>
            <person name="Cherry J.M."/>
        </authorList>
    </citation>
    <scope>GENOME REANNOTATION</scope>
    <source>
        <strain>ATCC 204508 / S288c</strain>
    </source>
</reference>
<comment type="subcellular location">
    <subcellularLocation>
        <location evidence="3">Membrane</location>
        <topology evidence="3">Multi-pass membrane protein</topology>
    </subcellularLocation>
</comment>
<comment type="domain">
    <text evidence="1">The HXXXXD motif is essential for acyltransferase activity and may constitute the binding site for the phosphate moiety of the glycerol-3-phosphate.</text>
</comment>
<comment type="similarity">
    <text evidence="3">Belongs to the 1-acyl-sn-glycerol-3-phosphate acyltransferase family.</text>
</comment>
<evidence type="ECO:0000250" key="1"/>
<evidence type="ECO:0000255" key="2"/>
<evidence type="ECO:0000305" key="3"/>
<name>YD018_YEAST</name>
<gene>
    <name type="ordered locus">YDR018C</name>
    <name type="ORF">PZF396</name>
    <name type="ORF">YD9335.04C</name>
</gene>
<accession>Q12185</accession>
<accession>D6VS04</accession>
<feature type="chain" id="PRO_0000208208" description="Uncharacterized acyltransferase YDR018C">
    <location>
        <begin position="1"/>
        <end position="396"/>
    </location>
</feature>
<feature type="transmembrane region" description="Helical" evidence="2">
    <location>
        <begin position="27"/>
        <end position="47"/>
    </location>
</feature>
<feature type="transmembrane region" description="Helical" evidence="2">
    <location>
        <begin position="69"/>
        <end position="89"/>
    </location>
</feature>
<feature type="transmembrane region" description="Helical" evidence="2">
    <location>
        <begin position="123"/>
        <end position="143"/>
    </location>
</feature>
<feature type="transmembrane region" description="Helical" evidence="2">
    <location>
        <begin position="372"/>
        <end position="392"/>
    </location>
</feature>
<feature type="short sequence motif" description="HXXXXD motif">
    <location>
        <begin position="117"/>
        <end position="122"/>
    </location>
</feature>
<organism>
    <name type="scientific">Saccharomyces cerevisiae (strain ATCC 204508 / S288c)</name>
    <name type="common">Baker's yeast</name>
    <dbReference type="NCBI Taxonomy" id="559292"/>
    <lineage>
        <taxon>Eukaryota</taxon>
        <taxon>Fungi</taxon>
        <taxon>Dikarya</taxon>
        <taxon>Ascomycota</taxon>
        <taxon>Saccharomycotina</taxon>
        <taxon>Saccharomycetes</taxon>
        <taxon>Saccharomycetales</taxon>
        <taxon>Saccharomycetaceae</taxon>
        <taxon>Saccharomyces</taxon>
    </lineage>
</organism>
<sequence>MKHSQKYRRYGIYEKTGNPFIKGLQRLLIACLFISGSLSIVVFQICLQVLLPWSKIRFQNGINQSKKAFIVLLCMILNMVAPSSLNVTFETSRPLKNSSNAKPCFRFKDRAIIIANHQMYADWIYLWWLSFVSNLGGNVYIILKKALQYIPLLGFGMRNFKFIFLSRNWQKDEKALTNSLVSMDLNARCKGPLTNYKSCYSKTNESIAAYNLIMFPEGTNLSLKTREKSEAFCQRAHLDHVQLRHLLLPHSKGLKFAVEKLAPSLDAIYDVTIGYSPALRTEYVGTKFTLKKIFLMGVYPEKVDFYIREFRVNEIPLQDDEVFFNWLLGVWKEKDQLLEDYYNTGQFKSNAKNDNQSIVVTTQTTGFQHETLTPRILSYYGFFAFLILVFVMKKNH</sequence>
<keyword id="KW-0012">Acyltransferase</keyword>
<keyword id="KW-0444">Lipid biosynthesis</keyword>
<keyword id="KW-0443">Lipid metabolism</keyword>
<keyword id="KW-0472">Membrane</keyword>
<keyword id="KW-0594">Phospholipid biosynthesis</keyword>
<keyword id="KW-1208">Phospholipid metabolism</keyword>
<keyword id="KW-1185">Reference proteome</keyword>
<keyword id="KW-0808">Transferase</keyword>
<keyword id="KW-0812">Transmembrane</keyword>
<keyword id="KW-1133">Transmembrane helix</keyword>
<protein>
    <recommendedName>
        <fullName>Uncharacterized acyltransferase YDR018C</fullName>
        <ecNumber>2.3.-.-</ecNumber>
    </recommendedName>
</protein>